<feature type="signal peptide" evidence="1">
    <location>
        <begin position="1"/>
        <end position="17"/>
    </location>
</feature>
<feature type="chain" id="PRO_0000342560" description="Putative OX-2 membrane glycoprotein homolog">
    <location>
        <begin position="18"/>
        <end position="290"/>
    </location>
</feature>
<feature type="topological domain" description="Extracellular" evidence="1">
    <location>
        <begin position="18"/>
        <end position="267"/>
    </location>
</feature>
<feature type="transmembrane region" description="Helical" evidence="1">
    <location>
        <begin position="268"/>
        <end position="288"/>
    </location>
</feature>
<feature type="topological domain" description="Cytoplasmic" evidence="1">
    <location>
        <begin position="289"/>
        <end position="290"/>
    </location>
</feature>
<feature type="domain" description="Ig-like V-type">
    <location>
        <begin position="23"/>
        <end position="135"/>
    </location>
</feature>
<feature type="domain" description="Ig-like C2-type">
    <location>
        <begin position="146"/>
        <end position="236"/>
    </location>
</feature>
<feature type="glycosylation site" description="N-linked (GlcNAc...) asparagine; by host" evidence="1">
    <location>
        <position position="71"/>
    </location>
</feature>
<feature type="glycosylation site" description="N-linked (GlcNAc...) asparagine; by host" evidence="1">
    <location>
        <position position="104"/>
    </location>
</feature>
<feature type="glycosylation site" description="N-linked (GlcNAc...) asparagine; by host" evidence="1">
    <location>
        <position position="194"/>
    </location>
</feature>
<feature type="glycosylation site" description="N-linked (GlcNAc...) asparagine; by host" evidence="1">
    <location>
        <position position="202"/>
    </location>
</feature>
<feature type="disulfide bond" evidence="2">
    <location>
        <begin position="41"/>
        <end position="125"/>
    </location>
</feature>
<proteinExistence type="inferred from homology"/>
<accession>Q89738</accession>
<accession>Q76UF8</accession>
<reference key="1">
    <citation type="journal article" date="1994" name="Virology">
        <title>Nucleotide sequence analysis of a 21-kbp region of the genome of human herpesvirus-6 containing homologues of human cytomegalovirus major immediate-early and replication genes.</title>
        <authorList>
            <person name="Nicholas J."/>
        </authorList>
    </citation>
    <scope>NUCLEOTIDE SEQUENCE [GENOMIC DNA]</scope>
</reference>
<reference key="2">
    <citation type="journal article" date="1995" name="Virology">
        <title>The DNA sequence of human herpesvirus-6: structure, coding content, and genome evolution.</title>
        <authorList>
            <person name="Gompels U.A."/>
            <person name="Nicholas J."/>
            <person name="Lawrence G.L."/>
            <person name="Jones M."/>
            <person name="Thomson B.J."/>
            <person name="Martin M.E.D."/>
            <person name="Efstathiou S."/>
            <person name="Craxton M.A."/>
            <person name="Macaulay H.A."/>
        </authorList>
    </citation>
    <scope>NUCLEOTIDE SEQUENCE [LARGE SCALE GENOMIC DNA]</scope>
</reference>
<dbReference type="EMBL" id="U13194">
    <property type="protein sequence ID" value="AAA68476.1"/>
    <property type="molecule type" value="Genomic_DNA"/>
</dbReference>
<dbReference type="EMBL" id="X83413">
    <property type="protein sequence ID" value="CAA58334.1"/>
    <property type="molecule type" value="Genomic_DNA"/>
</dbReference>
<dbReference type="RefSeq" id="NP_042978.1">
    <property type="nucleotide sequence ID" value="NC_001664.2"/>
</dbReference>
<dbReference type="GlyCosmos" id="Q89738">
    <property type="glycosylation" value="4 sites, No reported glycans"/>
</dbReference>
<dbReference type="DNASU" id="1487965"/>
<dbReference type="GeneID" id="1487965"/>
<dbReference type="KEGG" id="vg:1487965"/>
<dbReference type="Proteomes" id="UP000009295">
    <property type="component" value="Segment"/>
</dbReference>
<dbReference type="GO" id="GO:0016020">
    <property type="term" value="C:membrane"/>
    <property type="evidence" value="ECO:0007669"/>
    <property type="project" value="UniProtKB-SubCell"/>
</dbReference>
<dbReference type="GO" id="GO:0098632">
    <property type="term" value="F:cell-cell adhesion mediator activity"/>
    <property type="evidence" value="ECO:0007669"/>
    <property type="project" value="InterPro"/>
</dbReference>
<dbReference type="Gene3D" id="2.60.40.10">
    <property type="entry name" value="Immunoglobulins"/>
    <property type="match status" value="1"/>
</dbReference>
<dbReference type="InterPro" id="IPR007110">
    <property type="entry name" value="Ig-like_dom"/>
</dbReference>
<dbReference type="InterPro" id="IPR036179">
    <property type="entry name" value="Ig-like_dom_sf"/>
</dbReference>
<dbReference type="InterPro" id="IPR013783">
    <property type="entry name" value="Ig-like_fold"/>
</dbReference>
<dbReference type="InterPro" id="IPR047164">
    <property type="entry name" value="OX2G-like"/>
</dbReference>
<dbReference type="PANTHER" id="PTHR46841">
    <property type="entry name" value="OX-2 MEMBRANE GLYCOPROTEIN"/>
    <property type="match status" value="1"/>
</dbReference>
<dbReference type="SUPFAM" id="SSF48726">
    <property type="entry name" value="Immunoglobulin"/>
    <property type="match status" value="1"/>
</dbReference>
<dbReference type="PROSITE" id="PS50835">
    <property type="entry name" value="IG_LIKE"/>
    <property type="match status" value="1"/>
</dbReference>
<protein>
    <recommendedName>
        <fullName>Putative OX-2 membrane glycoprotein homolog</fullName>
    </recommendedName>
    <alternativeName>
        <fullName>Protein U85</fullName>
    </alternativeName>
</protein>
<keyword id="KW-1015">Disulfide bond</keyword>
<keyword id="KW-0325">Glycoprotein</keyword>
<keyword id="KW-0393">Immunoglobulin domain</keyword>
<keyword id="KW-0472">Membrane</keyword>
<keyword id="KW-1185">Reference proteome</keyword>
<keyword id="KW-0732">Signal</keyword>
<keyword id="KW-0812">Transmembrane</keyword>
<keyword id="KW-1133">Transmembrane helix</keyword>
<gene>
    <name type="primary">U85</name>
    <name type="synonym">EDLF1</name>
</gene>
<comment type="subcellular location">
    <subcellularLocation>
        <location evidence="3">Membrane</location>
        <topology evidence="3">Single-pass membrane protein</topology>
    </subcellularLocation>
</comment>
<organismHost>
    <name type="scientific">Homo sapiens</name>
    <name type="common">Human</name>
    <dbReference type="NCBI Taxonomy" id="9606"/>
</organismHost>
<evidence type="ECO:0000255" key="1"/>
<evidence type="ECO:0000255" key="2">
    <source>
        <dbReference type="PROSITE-ProRule" id="PRU00114"/>
    </source>
</evidence>
<evidence type="ECO:0000305" key="3"/>
<organism>
    <name type="scientific">Human herpesvirus 6A (strain Uganda-1102)</name>
    <name type="common">HHV-6 variant A</name>
    <name type="synonym">Human B lymphotropic virus</name>
    <dbReference type="NCBI Taxonomy" id="10370"/>
    <lineage>
        <taxon>Viruses</taxon>
        <taxon>Duplodnaviria</taxon>
        <taxon>Heunggongvirae</taxon>
        <taxon>Peploviricota</taxon>
        <taxon>Herviviricetes</taxon>
        <taxon>Herpesvirales</taxon>
        <taxon>Orthoherpesviridae</taxon>
        <taxon>Betaherpesvirinae</taxon>
        <taxon>Roseolovirus</taxon>
        <taxon>Roseolovirus humanbeta6a</taxon>
        <taxon>Human betaherpesvirus 6A</taxon>
    </lineage>
</organism>
<name>OX2V_HHV6U</name>
<sequence>MSSLMLRLLPLLYIISAHFVLHPETSPSLIYEIGSIVTFHCRLETTTNIRSVSWYNKNRLISNHEVQNMDNLSFTDDGYVLIHELNKINNLAVDSKLYFHIKHNRTTSLLKIKAKSAYDATCLTCTFTVDNEKTSATSCLKLFMKPIVVLYFRYLDNFLDVTCTVTSYPKPNVVIKFLGEVYKRDIPIVRQNENGSSTVSVNFTFKRRTKLEFVGKTVSCLASSWFTNQKASALVTSGEHTVQNHDEYSKEGVKSSNSDETVFTWTVPLILILISVIVLLISVCIVAFKS</sequence>